<reference key="1">
    <citation type="journal article" date="2005" name="Science">
        <title>The transcriptional landscape of the mammalian genome.</title>
        <authorList>
            <person name="Carninci P."/>
            <person name="Kasukawa T."/>
            <person name="Katayama S."/>
            <person name="Gough J."/>
            <person name="Frith M.C."/>
            <person name="Maeda N."/>
            <person name="Oyama R."/>
            <person name="Ravasi T."/>
            <person name="Lenhard B."/>
            <person name="Wells C."/>
            <person name="Kodzius R."/>
            <person name="Shimokawa K."/>
            <person name="Bajic V.B."/>
            <person name="Brenner S.E."/>
            <person name="Batalov S."/>
            <person name="Forrest A.R."/>
            <person name="Zavolan M."/>
            <person name="Davis M.J."/>
            <person name="Wilming L.G."/>
            <person name="Aidinis V."/>
            <person name="Allen J.E."/>
            <person name="Ambesi-Impiombato A."/>
            <person name="Apweiler R."/>
            <person name="Aturaliya R.N."/>
            <person name="Bailey T.L."/>
            <person name="Bansal M."/>
            <person name="Baxter L."/>
            <person name="Beisel K.W."/>
            <person name="Bersano T."/>
            <person name="Bono H."/>
            <person name="Chalk A.M."/>
            <person name="Chiu K.P."/>
            <person name="Choudhary V."/>
            <person name="Christoffels A."/>
            <person name="Clutterbuck D.R."/>
            <person name="Crowe M.L."/>
            <person name="Dalla E."/>
            <person name="Dalrymple B.P."/>
            <person name="de Bono B."/>
            <person name="Della Gatta G."/>
            <person name="di Bernardo D."/>
            <person name="Down T."/>
            <person name="Engstrom P."/>
            <person name="Fagiolini M."/>
            <person name="Faulkner G."/>
            <person name="Fletcher C.F."/>
            <person name="Fukushima T."/>
            <person name="Furuno M."/>
            <person name="Futaki S."/>
            <person name="Gariboldi M."/>
            <person name="Georgii-Hemming P."/>
            <person name="Gingeras T.R."/>
            <person name="Gojobori T."/>
            <person name="Green R.E."/>
            <person name="Gustincich S."/>
            <person name="Harbers M."/>
            <person name="Hayashi Y."/>
            <person name="Hensch T.K."/>
            <person name="Hirokawa N."/>
            <person name="Hill D."/>
            <person name="Huminiecki L."/>
            <person name="Iacono M."/>
            <person name="Ikeo K."/>
            <person name="Iwama A."/>
            <person name="Ishikawa T."/>
            <person name="Jakt M."/>
            <person name="Kanapin A."/>
            <person name="Katoh M."/>
            <person name="Kawasawa Y."/>
            <person name="Kelso J."/>
            <person name="Kitamura H."/>
            <person name="Kitano H."/>
            <person name="Kollias G."/>
            <person name="Krishnan S.P."/>
            <person name="Kruger A."/>
            <person name="Kummerfeld S.K."/>
            <person name="Kurochkin I.V."/>
            <person name="Lareau L.F."/>
            <person name="Lazarevic D."/>
            <person name="Lipovich L."/>
            <person name="Liu J."/>
            <person name="Liuni S."/>
            <person name="McWilliam S."/>
            <person name="Madan Babu M."/>
            <person name="Madera M."/>
            <person name="Marchionni L."/>
            <person name="Matsuda H."/>
            <person name="Matsuzawa S."/>
            <person name="Miki H."/>
            <person name="Mignone F."/>
            <person name="Miyake S."/>
            <person name="Morris K."/>
            <person name="Mottagui-Tabar S."/>
            <person name="Mulder N."/>
            <person name="Nakano N."/>
            <person name="Nakauchi H."/>
            <person name="Ng P."/>
            <person name="Nilsson R."/>
            <person name="Nishiguchi S."/>
            <person name="Nishikawa S."/>
            <person name="Nori F."/>
            <person name="Ohara O."/>
            <person name="Okazaki Y."/>
            <person name="Orlando V."/>
            <person name="Pang K.C."/>
            <person name="Pavan W.J."/>
            <person name="Pavesi G."/>
            <person name="Pesole G."/>
            <person name="Petrovsky N."/>
            <person name="Piazza S."/>
            <person name="Reed J."/>
            <person name="Reid J.F."/>
            <person name="Ring B.Z."/>
            <person name="Ringwald M."/>
            <person name="Rost B."/>
            <person name="Ruan Y."/>
            <person name="Salzberg S.L."/>
            <person name="Sandelin A."/>
            <person name="Schneider C."/>
            <person name="Schoenbach C."/>
            <person name="Sekiguchi K."/>
            <person name="Semple C.A."/>
            <person name="Seno S."/>
            <person name="Sessa L."/>
            <person name="Sheng Y."/>
            <person name="Shibata Y."/>
            <person name="Shimada H."/>
            <person name="Shimada K."/>
            <person name="Silva D."/>
            <person name="Sinclair B."/>
            <person name="Sperling S."/>
            <person name="Stupka E."/>
            <person name="Sugiura K."/>
            <person name="Sultana R."/>
            <person name="Takenaka Y."/>
            <person name="Taki K."/>
            <person name="Tammoja K."/>
            <person name="Tan S.L."/>
            <person name="Tang S."/>
            <person name="Taylor M.S."/>
            <person name="Tegner J."/>
            <person name="Teichmann S.A."/>
            <person name="Ueda H.R."/>
            <person name="van Nimwegen E."/>
            <person name="Verardo R."/>
            <person name="Wei C.L."/>
            <person name="Yagi K."/>
            <person name="Yamanishi H."/>
            <person name="Zabarovsky E."/>
            <person name="Zhu S."/>
            <person name="Zimmer A."/>
            <person name="Hide W."/>
            <person name="Bult C."/>
            <person name="Grimmond S.M."/>
            <person name="Teasdale R.D."/>
            <person name="Liu E.T."/>
            <person name="Brusic V."/>
            <person name="Quackenbush J."/>
            <person name="Wahlestedt C."/>
            <person name="Mattick J.S."/>
            <person name="Hume D.A."/>
            <person name="Kai C."/>
            <person name="Sasaki D."/>
            <person name="Tomaru Y."/>
            <person name="Fukuda S."/>
            <person name="Kanamori-Katayama M."/>
            <person name="Suzuki M."/>
            <person name="Aoki J."/>
            <person name="Arakawa T."/>
            <person name="Iida J."/>
            <person name="Imamura K."/>
            <person name="Itoh M."/>
            <person name="Kato T."/>
            <person name="Kawaji H."/>
            <person name="Kawagashira N."/>
            <person name="Kawashima T."/>
            <person name="Kojima M."/>
            <person name="Kondo S."/>
            <person name="Konno H."/>
            <person name="Nakano K."/>
            <person name="Ninomiya N."/>
            <person name="Nishio T."/>
            <person name="Okada M."/>
            <person name="Plessy C."/>
            <person name="Shibata K."/>
            <person name="Shiraki T."/>
            <person name="Suzuki S."/>
            <person name="Tagami M."/>
            <person name="Waki K."/>
            <person name="Watahiki A."/>
            <person name="Okamura-Oho Y."/>
            <person name="Suzuki H."/>
            <person name="Kawai J."/>
            <person name="Hayashizaki Y."/>
        </authorList>
    </citation>
    <scope>NUCLEOTIDE SEQUENCE [LARGE SCALE MRNA]</scope>
    <source>
        <strain>NOD</strain>
        <tissue>Cerebellum</tissue>
        <tissue>Spleen</tissue>
    </source>
</reference>
<reference key="2">
    <citation type="journal article" date="2004" name="Genome Res.">
        <title>The status, quality, and expansion of the NIH full-length cDNA project: the Mammalian Gene Collection (MGC).</title>
        <authorList>
            <consortium name="The MGC Project Team"/>
        </authorList>
    </citation>
    <scope>NUCLEOTIDE SEQUENCE [LARGE SCALE MRNA]</scope>
    <scope>VARIANT ALA-884</scope>
    <source>
        <strain>Czech II</strain>
        <strain>FVB/N</strain>
        <tissue>Mammary cancer</tissue>
    </source>
</reference>
<reference key="3">
    <citation type="journal article" date="2003" name="Nat. Immunol.">
        <title>An essential role for NOD1 in host recognition of bacterial peptidoglycan containing diaminopimelic acid.</title>
        <authorList>
            <person name="Chamaillard M."/>
            <person name="Hashimoto M."/>
            <person name="Horie Y."/>
            <person name="Masumoto J."/>
            <person name="Qiu S."/>
            <person name="Saab L."/>
            <person name="Ogura Y."/>
            <person name="Kawasaki A."/>
            <person name="Fukase K."/>
            <person name="Kusumoto S."/>
            <person name="Valvano M.A."/>
            <person name="Foster S.J."/>
            <person name="Mak T.W."/>
            <person name="Nunez G."/>
            <person name="Inohara N."/>
        </authorList>
    </citation>
    <scope>FUNCTION</scope>
    <scope>DISRUPTION PHENOTYPE</scope>
</reference>
<reference key="4">
    <citation type="journal article" date="2005" name="EMBO Rep.">
        <title>Murine Nod1 but not its human orthologue mediates innate immune detection of tracheal cytotoxin.</title>
        <authorList>
            <person name="Magalhaes J.G."/>
            <person name="Philpott D.J."/>
            <person name="Nahori M.A."/>
            <person name="Jehanno M."/>
            <person name="Fritz J."/>
            <person name="Le Bourhis L."/>
            <person name="Viala J."/>
            <person name="Hugot J.P."/>
            <person name="Giovannini M."/>
            <person name="Bertin J."/>
            <person name="Lepoivre M."/>
            <person name="Mengin-Lecreulx D."/>
            <person name="Sansonetti P.J."/>
            <person name="Girardin S.E."/>
        </authorList>
    </citation>
    <scope>FUNCTION</scope>
</reference>
<reference key="5">
    <citation type="journal article" date="2010" name="Cell">
        <title>A tissue-specific atlas of mouse protein phosphorylation and expression.</title>
        <authorList>
            <person name="Huttlin E.L."/>
            <person name="Jedrychowski M.P."/>
            <person name="Elias J.E."/>
            <person name="Goswami T."/>
            <person name="Rad R."/>
            <person name="Beausoleil S.A."/>
            <person name="Villen J."/>
            <person name="Haas W."/>
            <person name="Sowa M.E."/>
            <person name="Gygi S.P."/>
        </authorList>
    </citation>
    <scope>IDENTIFICATION BY MASS SPECTROMETRY [LARGE SCALE ANALYSIS]</scope>
    <source>
        <tissue>Lung</tissue>
    </source>
</reference>
<reference key="6">
    <citation type="journal article" date="2010" name="Nat. Immunol.">
        <title>Nod1 and Nod2 direct autophagy by recruiting ATG16L1 to the plasma membrane at the site of bacterial entry.</title>
        <authorList>
            <person name="Travassos L.H."/>
            <person name="Carneiro L.A."/>
            <person name="Ramjeet M."/>
            <person name="Hussey S."/>
            <person name="Kim Y.G."/>
            <person name="Magalhaes J.G."/>
            <person name="Yuan L."/>
            <person name="Soares F."/>
            <person name="Chea E."/>
            <person name="Le Bourhis L."/>
            <person name="Boneca I.G."/>
            <person name="Allaoui A."/>
            <person name="Jones N.L."/>
            <person name="Nunez G."/>
            <person name="Girardin S.E."/>
            <person name="Philpott D.J."/>
        </authorList>
    </citation>
    <scope>FUNCTION</scope>
    <scope>INTERACTION WITH ATG16L1</scope>
</reference>
<reference key="7">
    <citation type="journal article" date="2011" name="Diabetes">
        <title>NOD1 activators link innate immunity to insulin resistance.</title>
        <authorList>
            <person name="Schertzer J.D."/>
            <person name="Tamrakar A.K."/>
            <person name="Magalhaes J.G."/>
            <person name="Pereira S."/>
            <person name="Bilan P.J."/>
            <person name="Fullerton M.D."/>
            <person name="Liu Z."/>
            <person name="Steinberg G.R."/>
            <person name="Giacca A."/>
            <person name="Philpott D.J."/>
            <person name="Klip A."/>
        </authorList>
    </citation>
    <scope>DISRUPTION PHENOTYPE</scope>
    <scope>FUNCTION</scope>
    <scope>TISSUE SPECIFICITY</scope>
</reference>
<reference key="8">
    <citation type="journal article" date="2016" name="Nature">
        <title>NOD1 and NOD2 signalling links ER stress with inflammation.</title>
        <authorList>
            <person name="Keestra-Gounder A.M."/>
            <person name="Byndloss M.X."/>
            <person name="Seyffert N."/>
            <person name="Young B.M."/>
            <person name="Chavez-Arroyo A."/>
            <person name="Tsai A.Y."/>
            <person name="Cevallos S.A."/>
            <person name="Winter M.G."/>
            <person name="Pham O.H."/>
            <person name="Tiffany C.R."/>
            <person name="de Jong M.F."/>
            <person name="Kerrinnes T."/>
            <person name="Ravindran R."/>
            <person name="Luciw P.A."/>
            <person name="McSorley S.J."/>
            <person name="Baeumler A.J."/>
            <person name="Tsolis R.M."/>
        </authorList>
    </citation>
    <scope>FUNCTION</scope>
</reference>
<reference key="9">
    <citation type="journal article" date="2019" name="Cell Res.">
        <title>Intestinal lysozyme liberates Nod1 ligands from microbes to direct insulin trafficking in pancreatic beta cells.</title>
        <authorList>
            <person name="Zhang Q."/>
            <person name="Pan Y."/>
            <person name="Zeng B."/>
            <person name="Zheng X."/>
            <person name="Wang H."/>
            <person name="Shen X."/>
            <person name="Li H."/>
            <person name="Jiang Q."/>
            <person name="Zhao J."/>
            <person name="Meng Z.X."/>
            <person name="Li P."/>
            <person name="Chen Z."/>
            <person name="Wei H."/>
            <person name="Liu Z."/>
        </authorList>
    </citation>
    <scope>FUNCTION</scope>
    <scope>SUBCELLULAR LOCATION</scope>
    <scope>DISRUPTION PHENOTYPE</scope>
</reference>
<gene>
    <name evidence="11 13" type="primary">Nod1</name>
</gene>
<organism>
    <name type="scientific">Mus musculus</name>
    <name type="common">Mouse</name>
    <dbReference type="NCBI Taxonomy" id="10090"/>
    <lineage>
        <taxon>Eukaryota</taxon>
        <taxon>Metazoa</taxon>
        <taxon>Chordata</taxon>
        <taxon>Craniata</taxon>
        <taxon>Vertebrata</taxon>
        <taxon>Euteleostomi</taxon>
        <taxon>Mammalia</taxon>
        <taxon>Eutheria</taxon>
        <taxon>Euarchontoglires</taxon>
        <taxon>Glires</taxon>
        <taxon>Rodentia</taxon>
        <taxon>Myomorpha</taxon>
        <taxon>Muroidea</taxon>
        <taxon>Muridae</taxon>
        <taxon>Murinae</taxon>
        <taxon>Mus</taxon>
        <taxon>Mus</taxon>
    </lineage>
</organism>
<sequence length="953" mass="107740">MEEHGHHEMEGTPLGCHSHIKLLKINREHLVTNIRNTQCLVDNLLENGYFSAEDAEIVCACPTKPDKVRKILDLVQSKGEEVSEFFLYVLQQLEDAYVDLRLWLSEIGFSPSQLIRTKTIVNTDPVSRYTQQLRHQLGRDSKFMLCYAQKEDLLLEETYMDTLMELVGFNNENLGSLGGLDCLLDHSTGVLNEHGETVFVFGDAGVGKSMLLQRLQSLWASGRLTSTAKFFFHFRCRMFSCFKESDMLSLQDLLFKHFCYPEQDPEEVFSFLLRFPHTALFTFDGLDELHSDFDLSRVPDSCCPWEPAHPLVLLANLLSGRLLKGAGKLLTARTGVEVPRQLLRKKVLLRGFSPSHLRAYARRMFPERTAQEHLLQQLDANPNLCSLCGVPLFCWIIFRCFQHFQTVFEGSSSQLPDCAVTLTDVFLLVTEVHLNRPQPSSLVQRNTRSPAETLRAGWRTLHALGEVAHRGTDKSLFVFGQEEVQASKLQEGDLQLGFLRALPDVGPEQGQSYEFFHLTLQAFFTAFFLVADDKVSTRELLRFFREWTSPGEATSSSCHSSFFSFQCLGGRSRLGPDPFRNKDHFQFTNLFLCGLLAKARQKLLRQLVPKAILRRKRKALWAHLFASLRSYLKSLPRVQSGGFNQVHAMPTFLWMLRCIYETQSQKVGRLAARGISADYLKLAFCNACSADCSALSFVLHHFHRQLALDLDNNNLNDYGVQELQPCFSRLTVIRLSVNQITDTGVKVLCEELTKYKIVTFLGLYNNQITDIGARYVAQILDECRGLKHLKLGKNRITSEGGKCVALAVKNSTSIVDVGMWGNQIGDEGAKAFAEALKDHPSLTTLSLAFNGISPEGGKSLAQALKQNTTLTVIWLTKNELNDESAECFAEMLRVNQTLRHLWLIQNRITAKGTAQLARALQKNTAITEICLNGNLIKPEEAKVFENEKRIICF</sequence>
<evidence type="ECO:0000250" key="1">
    <source>
        <dbReference type="UniProtKB" id="Q9Y239"/>
    </source>
</evidence>
<evidence type="ECO:0000255" key="2">
    <source>
        <dbReference type="PROSITE-ProRule" id="PRU00046"/>
    </source>
</evidence>
<evidence type="ECO:0000255" key="3">
    <source>
        <dbReference type="PROSITE-ProRule" id="PRU00136"/>
    </source>
</evidence>
<evidence type="ECO:0000269" key="4">
    <source>
    </source>
</evidence>
<evidence type="ECO:0000269" key="5">
    <source>
    </source>
</evidence>
<evidence type="ECO:0000269" key="6">
    <source>
    </source>
</evidence>
<evidence type="ECO:0000269" key="7">
    <source>
    </source>
</evidence>
<evidence type="ECO:0000269" key="8">
    <source>
    </source>
</evidence>
<evidence type="ECO:0000269" key="9">
    <source>
    </source>
</evidence>
<evidence type="ECO:0000269" key="10">
    <source>
    </source>
</evidence>
<evidence type="ECO:0000303" key="11">
    <source>
    </source>
</evidence>
<evidence type="ECO:0000305" key="12"/>
<evidence type="ECO:0000312" key="13">
    <source>
        <dbReference type="MGI" id="MGI:1341839"/>
    </source>
</evidence>
<feature type="chain" id="PRO_0000144078" description="Nucleotide-binding oligomerization domain-containing protein 1">
    <location>
        <begin position="1"/>
        <end position="953"/>
    </location>
</feature>
<feature type="domain" description="CARD" evidence="2">
    <location>
        <begin position="15"/>
        <end position="107"/>
    </location>
</feature>
<feature type="domain" description="NACHT" evidence="3">
    <location>
        <begin position="196"/>
        <end position="531"/>
    </location>
</feature>
<feature type="repeat" description="LRR 1">
    <location>
        <begin position="702"/>
        <end position="725"/>
    </location>
</feature>
<feature type="repeat" description="LRR 2">
    <location>
        <begin position="727"/>
        <end position="750"/>
    </location>
</feature>
<feature type="repeat" description="LRR 3">
    <location>
        <begin position="755"/>
        <end position="778"/>
    </location>
</feature>
<feature type="repeat" description="LRR 4">
    <location>
        <begin position="783"/>
        <end position="806"/>
    </location>
</feature>
<feature type="repeat" description="LRR 5">
    <location>
        <begin position="839"/>
        <end position="862"/>
    </location>
</feature>
<feature type="repeat" description="LRR 6">
    <location>
        <begin position="867"/>
        <end position="890"/>
    </location>
</feature>
<feature type="repeat" description="LRR 7">
    <location>
        <begin position="895"/>
        <end position="918"/>
    </location>
</feature>
<feature type="repeat" description="LRR 8">
    <location>
        <begin position="923"/>
        <end position="946"/>
    </location>
</feature>
<feature type="binding site" evidence="3">
    <location>
        <begin position="202"/>
        <end position="209"/>
    </location>
    <ligand>
        <name>ATP</name>
        <dbReference type="ChEBI" id="CHEBI:30616"/>
    </ligand>
</feature>
<feature type="lipid moiety-binding region" description="S-palmitoyl cysteine" evidence="1">
    <location>
        <position position="558"/>
    </location>
</feature>
<feature type="lipid moiety-binding region" description="S-palmitoyl cysteine" evidence="1">
    <location>
        <position position="567"/>
    </location>
</feature>
<feature type="lipid moiety-binding region" description="S-palmitoyl cysteine" evidence="1">
    <location>
        <position position="952"/>
    </location>
</feature>
<feature type="sequence variant" description="In strain: Czech II." evidence="5">
    <original>S</original>
    <variation>A</variation>
    <location>
        <position position="884"/>
    </location>
</feature>
<keyword id="KW-0053">Apoptosis</keyword>
<keyword id="KW-0067">ATP-binding</keyword>
<keyword id="KW-1003">Cell membrane</keyword>
<keyword id="KW-0963">Cytoplasm</keyword>
<keyword id="KW-0391">Immunity</keyword>
<keyword id="KW-0399">Innate immunity</keyword>
<keyword id="KW-0433">Leucine-rich repeat</keyword>
<keyword id="KW-0449">Lipoprotein</keyword>
<keyword id="KW-0472">Membrane</keyword>
<keyword id="KW-0547">Nucleotide-binding</keyword>
<keyword id="KW-0564">Palmitate</keyword>
<keyword id="KW-1185">Reference proteome</keyword>
<keyword id="KW-0677">Repeat</keyword>
<keyword id="KW-0832">Ubl conjugation</keyword>
<name>NOD1_MOUSE</name>
<comment type="function">
    <text evidence="1 4 6 7 8 9 10">Pattern recognition receptor (PRR) that detects bacterial peptidoglycan fragments and other danger signals and thus participates in both innate and adaptive immune responses (PubMed:12796777, PubMed:21715553). Specifically recognizes and binds gamma-D-glutamyl-meso-diaminopimelic acid (iE-DAP), a dipeptide present in peptidoglycan of Gram-negative bacteria (PubMed:12796777, PubMed:16211083). Preferentially binds iE-DAP in tetrapeptide-containing muropeptides (MurNAc-TetraDAP or TetraDAP) (PubMed:16211083). Ligand binding triggers oligomerization that facilitates the binding and subsequent activation of the proximal adapter receptor-interacting RIPK2 (By similarity). Following recruitment, RIPK2 undergoes 'Met-1'- (linear) and 'Lys-63'-linked polyubiquitination by E3 ubiquitin-protein ligases XIAP, BIRC2, BIRC3 and the LUBAC complex, becoming a scaffolding protein for downstream effectors, triggering activation of the NF-kappa-B and MAP kinases signaling (By similarity). This in turn leads to the transcriptional activation of hundreds of genes involved in immune response (By similarity). Also acts as a regulator of antiviral response elicited by dsRNA and the expression of RLR pathway members by targeting IFIH1 and TRAF3 to modulate the formation of IFIH1-MAVS and TRAF3-MAVS complexes leading to increased transcription of type I IFNs (By similarity). Also acts as a regulator of autophagy via its interaction with ATG16L1, possibly by recruiting ATG16L1 at the site of bacterial entry (PubMed:19898471). Besides recognizing pathogens, also involved in the endoplasmic reticulum stress response: acts by sensing and binding to the cytosolic metabolite sphingosine-1-phosphate generated in response to endoplasmic reticulum stress, initiating an inflammation process that leads to activation of the NF-kappa-B and MAP kinases signaling (PubMed:27007849). In addition, plays a role in insulin trafficking in beta cells in a cell-autonomous manner (PubMed:21715553, PubMed:31201384). Mechanistically, upon recognizing cognate ligands, NOD1 and RIPK2 localize to insulin vesicles where they recruit RAB1A to direct insulin trafficking through the cytoplasm (PubMed:31201384).</text>
</comment>
<comment type="subunit">
    <text evidence="1 7">Homooligomer: homooligomerizes following ligand-binding, promoting RIPK2 recruitment (By similarity). Interacts (via CARD domain) with RIPK2 (via CARD domain) (By similarity). Following RIPK2 recruitment, RIPK2 homooligomerizes via its CARD domain and forms long filaments named RIPosomes (By similarity). Interacts (via CARD domain) with ubiquitin; inhibiting interaction with RIPK2 (By similarity). Interacts with ARHGEF2 (By similarity). Interacts with NLRP10 and recruits it to the cell membrane following invasive bacterial infection (By similarity). Interacts with IFIH1; this interaction promotes transcription of antiviral genes and inhibition of viral replication (By similarity). Interacts with Irgm1; promoting NOD1 degradation (By similarity). Interacts with ATG16L1 (PubMed:19898471).</text>
</comment>
<comment type="subcellular location">
    <subcellularLocation>
        <location evidence="1">Cell membrane</location>
        <topology evidence="1">Lipid-anchor</topology>
    </subcellularLocation>
    <subcellularLocation>
        <location evidence="1">Apical cell membrane</location>
    </subcellularLocation>
    <subcellularLocation>
        <location evidence="1">Basolateral cell membrane</location>
    </subcellularLocation>
    <subcellularLocation>
        <location evidence="1">Cytoplasm</location>
    </subcellularLocation>
    <text evidence="1">Detected in the cytoplasm and at the cell membrane. Following bacterial infection, localizes to bacterial entry sites in the cell membrane. Recruited to the basolateral and apical membranes in polarized epithelial cells.</text>
</comment>
<comment type="tissue specificity">
    <text evidence="8">Although ubiquitously expressed, NOD1 levels are more abundant in immune cells, the gastrointestinal tract, and adipose tissue.</text>
</comment>
<comment type="PTM">
    <text evidence="1">Ubiquitinated. 'Lys-48'-linked polyubiquitination by RNF34 promotes proteasomal degradation and thereby negatively regulates NOD1 for instance in NF-kappa-B activation.</text>
</comment>
<comment type="PTM">
    <text evidence="1">Palmitoylated. Palmitoylation is required for proper recruitment to the bacterial entry site and hence for proper signaling upon cognate peptidoglycan detection.</text>
</comment>
<comment type="PTM">
    <text evidence="1">Degraded via selective autophagy following interaction with Irgm1. Irgm1 promotes NOD1-RIPK2 RIPosome recruitment to autophagosome membranes, promoting their SQSTM1/p62-dependent autophagic degradation.</text>
</comment>
<comment type="disruption phenotype">
    <text evidence="4 8 10">No visible phenotype in absence of infection (PubMed:12796777). Mice however show impaired cytokine secretion in response to bacterial infection: macrophages do not secrete cytokines in response to synthetic gamma-D-glutamyl-meso-diaminopimelic acid (iE-DAP) and do not prime the lipopolysaccharide response (PubMed:12796777). Deletion mutant mice show a normal glucose tolerance but the level of circulating insulin after glucose infusion was significantly lower than in wild-type mice (PubMed:31201384). Mice lacking Nod1 and Nod2 are protected from high-fat diet-induced inflammation, lipid accumulation, and peripheral insulin intolerance (PubMed:21715553).</text>
</comment>
<comment type="similarity">
    <text evidence="12">Belongs to the NOD1-NOD2 family.</text>
</comment>
<comment type="caution">
    <text evidence="6">Human and mouse NOD1 bind gamma-D-glutamyl-meso-diaminopimelic acid (iE-DAP) in a different context (PubMed:16211083). do not detect the same muropeptide from bacterial peptidoglycan: while human NOD1 detects a tripeptide-containing muropeptide (MurNAc-TriDAP or TriDAP), mouse Nod1 needs a tetrapeptide structure for efficient sensing (MurNAc-tetraDAP or TetraDAP) (PubMed:16211083).</text>
</comment>
<proteinExistence type="evidence at protein level"/>
<dbReference type="EMBL" id="AK082663">
    <property type="protein sequence ID" value="BAC38566.1"/>
    <property type="molecule type" value="mRNA"/>
</dbReference>
<dbReference type="EMBL" id="AK089662">
    <property type="protein sequence ID" value="BAC40940.1"/>
    <property type="molecule type" value="mRNA"/>
</dbReference>
<dbReference type="EMBL" id="BC042670">
    <property type="protein sequence ID" value="AAH42670.1"/>
    <property type="molecule type" value="mRNA"/>
</dbReference>
<dbReference type="EMBL" id="BC043670">
    <property type="protein sequence ID" value="AAH43670.1"/>
    <property type="molecule type" value="mRNA"/>
</dbReference>
<dbReference type="CCDS" id="CCDS20160.1"/>
<dbReference type="RefSeq" id="NP_001164478.1">
    <property type="nucleotide sequence ID" value="NM_001171007.1"/>
</dbReference>
<dbReference type="RefSeq" id="NP_766317.1">
    <property type="nucleotide sequence ID" value="NM_172729.3"/>
</dbReference>
<dbReference type="SMR" id="Q8BHB0"/>
<dbReference type="BioGRID" id="223435">
    <property type="interactions" value="5"/>
</dbReference>
<dbReference type="DIP" id="DIP-59535N"/>
<dbReference type="FunCoup" id="Q8BHB0">
    <property type="interactions" value="651"/>
</dbReference>
<dbReference type="IntAct" id="Q8BHB0">
    <property type="interactions" value="1"/>
</dbReference>
<dbReference type="STRING" id="10090.ENSMUSP00000055747"/>
<dbReference type="ChEMBL" id="CHEMBL5291544"/>
<dbReference type="iPTMnet" id="Q8BHB0"/>
<dbReference type="PhosphoSitePlus" id="Q8BHB0"/>
<dbReference type="PaxDb" id="10090-ENSMUSP00000055747"/>
<dbReference type="ProteomicsDB" id="295502"/>
<dbReference type="Pumba" id="Q8BHB0"/>
<dbReference type="Antibodypedia" id="26181">
    <property type="antibodies" value="401 antibodies from 37 providers"/>
</dbReference>
<dbReference type="Ensembl" id="ENSMUST00000060655.15">
    <property type="protein sequence ID" value="ENSMUSP00000055747.9"/>
    <property type="gene ID" value="ENSMUSG00000038058.15"/>
</dbReference>
<dbReference type="Ensembl" id="ENSMUST00000168172.4">
    <property type="protein sequence ID" value="ENSMUSP00000130487.2"/>
    <property type="gene ID" value="ENSMUSG00000038058.15"/>
</dbReference>
<dbReference type="GeneID" id="107607"/>
<dbReference type="KEGG" id="mmu:107607"/>
<dbReference type="UCSC" id="uc009caf.2">
    <property type="organism name" value="mouse"/>
</dbReference>
<dbReference type="AGR" id="MGI:1341839"/>
<dbReference type="CTD" id="10392"/>
<dbReference type="MGI" id="MGI:1341839">
    <property type="gene designation" value="Nod1"/>
</dbReference>
<dbReference type="VEuPathDB" id="HostDB:ENSMUSG00000038058"/>
<dbReference type="eggNOG" id="KOG4308">
    <property type="taxonomic scope" value="Eukaryota"/>
</dbReference>
<dbReference type="GeneTree" id="ENSGT00940000157845"/>
<dbReference type="HOGENOM" id="CLU_011291_1_0_1"/>
<dbReference type="InParanoid" id="Q8BHB0"/>
<dbReference type="OMA" id="AHWGMEK"/>
<dbReference type="OrthoDB" id="120976at2759"/>
<dbReference type="PhylomeDB" id="Q8BHB0"/>
<dbReference type="TreeFam" id="TF352118"/>
<dbReference type="Reactome" id="R-MMU-168638">
    <property type="pathway name" value="NOD1/2 Signaling Pathway"/>
</dbReference>
<dbReference type="Reactome" id="R-MMU-450302">
    <property type="pathway name" value="activated TAK1 mediates p38 MAPK activation"/>
</dbReference>
<dbReference type="Reactome" id="R-MMU-450321">
    <property type="pathway name" value="JNK (c-Jun kinases) phosphorylation and activation mediated by activated human TAK1"/>
</dbReference>
<dbReference type="Reactome" id="R-MMU-5689896">
    <property type="pathway name" value="Ovarian tumor domain proteases"/>
</dbReference>
<dbReference type="BioGRID-ORCS" id="107607">
    <property type="hits" value="2 hits in 77 CRISPR screens"/>
</dbReference>
<dbReference type="ChiTaRS" id="Nod1">
    <property type="organism name" value="mouse"/>
</dbReference>
<dbReference type="PRO" id="PR:Q8BHB0"/>
<dbReference type="Proteomes" id="UP000000589">
    <property type="component" value="Chromosome 6"/>
</dbReference>
<dbReference type="RNAct" id="Q8BHB0">
    <property type="molecule type" value="protein"/>
</dbReference>
<dbReference type="Bgee" id="ENSMUSG00000038058">
    <property type="expression patterns" value="Expressed in mesenteric lymph node and 173 other cell types or tissues"/>
</dbReference>
<dbReference type="ExpressionAtlas" id="Q8BHB0">
    <property type="expression patterns" value="baseline and differential"/>
</dbReference>
<dbReference type="GO" id="GO:0016324">
    <property type="term" value="C:apical plasma membrane"/>
    <property type="evidence" value="ECO:0007669"/>
    <property type="project" value="UniProtKB-SubCell"/>
</dbReference>
<dbReference type="GO" id="GO:0016323">
    <property type="term" value="C:basolateral plasma membrane"/>
    <property type="evidence" value="ECO:0000250"/>
    <property type="project" value="UniProtKB"/>
</dbReference>
<dbReference type="GO" id="GO:0005737">
    <property type="term" value="C:cytoplasm"/>
    <property type="evidence" value="ECO:0000266"/>
    <property type="project" value="MGI"/>
</dbReference>
<dbReference type="GO" id="GO:0005829">
    <property type="term" value="C:cytosol"/>
    <property type="evidence" value="ECO:0007669"/>
    <property type="project" value="Ensembl"/>
</dbReference>
<dbReference type="GO" id="GO:0045335">
    <property type="term" value="C:phagocytic vesicle"/>
    <property type="evidence" value="ECO:0000314"/>
    <property type="project" value="UniProtKB"/>
</dbReference>
<dbReference type="GO" id="GO:0005524">
    <property type="term" value="F:ATP binding"/>
    <property type="evidence" value="ECO:0007669"/>
    <property type="project" value="UniProtKB-KW"/>
</dbReference>
<dbReference type="GO" id="GO:0050700">
    <property type="term" value="F:CARD domain binding"/>
    <property type="evidence" value="ECO:0000266"/>
    <property type="project" value="MGI"/>
</dbReference>
<dbReference type="GO" id="GO:0042802">
    <property type="term" value="F:identical protein binding"/>
    <property type="evidence" value="ECO:0000266"/>
    <property type="project" value="MGI"/>
</dbReference>
<dbReference type="GO" id="GO:0038187">
    <property type="term" value="F:pattern recognition receptor activity"/>
    <property type="evidence" value="ECO:0000314"/>
    <property type="project" value="UniProtKB"/>
</dbReference>
<dbReference type="GO" id="GO:0042834">
    <property type="term" value="F:peptidoglycan binding"/>
    <property type="evidence" value="ECO:0000314"/>
    <property type="project" value="UniProtKB"/>
</dbReference>
<dbReference type="GO" id="GO:0042803">
    <property type="term" value="F:protein homodimerization activity"/>
    <property type="evidence" value="ECO:0007669"/>
    <property type="project" value="Ensembl"/>
</dbReference>
<dbReference type="GO" id="GO:0044877">
    <property type="term" value="F:protein-containing complex binding"/>
    <property type="evidence" value="ECO:0007669"/>
    <property type="project" value="Ensembl"/>
</dbReference>
<dbReference type="GO" id="GO:0043130">
    <property type="term" value="F:ubiquitin binding"/>
    <property type="evidence" value="ECO:0000250"/>
    <property type="project" value="UniProtKB"/>
</dbReference>
<dbReference type="GO" id="GO:0006915">
    <property type="term" value="P:apoptotic process"/>
    <property type="evidence" value="ECO:0007669"/>
    <property type="project" value="UniProtKB-KW"/>
</dbReference>
<dbReference type="GO" id="GO:0071225">
    <property type="term" value="P:cellular response to muramyl dipeptide"/>
    <property type="evidence" value="ECO:0007669"/>
    <property type="project" value="Ensembl"/>
</dbReference>
<dbReference type="GO" id="GO:0042742">
    <property type="term" value="P:defense response to bacterium"/>
    <property type="evidence" value="ECO:0000250"/>
    <property type="project" value="HGNC-UCL"/>
</dbReference>
<dbReference type="GO" id="GO:0050829">
    <property type="term" value="P:defense response to Gram-negative bacterium"/>
    <property type="evidence" value="ECO:0000250"/>
    <property type="project" value="UniProtKB"/>
</dbReference>
<dbReference type="GO" id="GO:0050830">
    <property type="term" value="P:defense response to Gram-positive bacterium"/>
    <property type="evidence" value="ECO:0000315"/>
    <property type="project" value="MGI"/>
</dbReference>
<dbReference type="GO" id="GO:0016045">
    <property type="term" value="P:detection of bacterium"/>
    <property type="evidence" value="ECO:0000250"/>
    <property type="project" value="HGNC-UCL"/>
</dbReference>
<dbReference type="GO" id="GO:0070371">
    <property type="term" value="P:ERK1 and ERK2 cascade"/>
    <property type="evidence" value="ECO:0000314"/>
    <property type="project" value="MGI"/>
</dbReference>
<dbReference type="GO" id="GO:0045087">
    <property type="term" value="P:innate immune response"/>
    <property type="evidence" value="ECO:0007669"/>
    <property type="project" value="UniProtKB-KW"/>
</dbReference>
<dbReference type="GO" id="GO:0035556">
    <property type="term" value="P:intracellular signal transduction"/>
    <property type="evidence" value="ECO:0000250"/>
    <property type="project" value="HGNC-UCL"/>
</dbReference>
<dbReference type="GO" id="GO:0007254">
    <property type="term" value="P:JNK cascade"/>
    <property type="evidence" value="ECO:0000314"/>
    <property type="project" value="MGI"/>
</dbReference>
<dbReference type="GO" id="GO:0070427">
    <property type="term" value="P:nucleotide-binding oligomerization domain containing 1 signaling pathway"/>
    <property type="evidence" value="ECO:0000314"/>
    <property type="project" value="UniProtKB"/>
</dbReference>
<dbReference type="GO" id="GO:0043065">
    <property type="term" value="P:positive regulation of apoptotic process"/>
    <property type="evidence" value="ECO:0007669"/>
    <property type="project" value="Ensembl"/>
</dbReference>
<dbReference type="GO" id="GO:0010508">
    <property type="term" value="P:positive regulation of autophagy"/>
    <property type="evidence" value="ECO:0000314"/>
    <property type="project" value="UniProtKB"/>
</dbReference>
<dbReference type="GO" id="GO:0043123">
    <property type="term" value="P:positive regulation of canonical NF-kappaB signal transduction"/>
    <property type="evidence" value="ECO:0000314"/>
    <property type="project" value="UniProtKB"/>
</dbReference>
<dbReference type="GO" id="GO:0002606">
    <property type="term" value="P:positive regulation of dendritic cell antigen processing and presentation"/>
    <property type="evidence" value="ECO:0000315"/>
    <property type="project" value="BHF-UCL"/>
</dbReference>
<dbReference type="GO" id="GO:0070374">
    <property type="term" value="P:positive regulation of ERK1 and ERK2 cascade"/>
    <property type="evidence" value="ECO:0000314"/>
    <property type="project" value="MGI"/>
</dbReference>
<dbReference type="GO" id="GO:0032731">
    <property type="term" value="P:positive regulation of interleukin-1 beta production"/>
    <property type="evidence" value="ECO:0007669"/>
    <property type="project" value="Ensembl"/>
</dbReference>
<dbReference type="GO" id="GO:0032755">
    <property type="term" value="P:positive regulation of interleukin-6 production"/>
    <property type="evidence" value="ECO:0000315"/>
    <property type="project" value="MGI"/>
</dbReference>
<dbReference type="GO" id="GO:0032757">
    <property type="term" value="P:positive regulation of interleukin-8 production"/>
    <property type="evidence" value="ECO:0000250"/>
    <property type="project" value="HGNC-UCL"/>
</dbReference>
<dbReference type="GO" id="GO:0046330">
    <property type="term" value="P:positive regulation of JNK cascade"/>
    <property type="evidence" value="ECO:0000314"/>
    <property type="project" value="MGI"/>
</dbReference>
<dbReference type="GO" id="GO:0060907">
    <property type="term" value="P:positive regulation of macrophage cytokine production"/>
    <property type="evidence" value="ECO:0000315"/>
    <property type="project" value="MGI"/>
</dbReference>
<dbReference type="GO" id="GO:0051092">
    <property type="term" value="P:positive regulation of NF-kappaB transcription factor activity"/>
    <property type="evidence" value="ECO:0000250"/>
    <property type="project" value="UniProtKB"/>
</dbReference>
<dbReference type="GO" id="GO:1901224">
    <property type="term" value="P:positive regulation of non-canonical NF-kappaB signal transduction"/>
    <property type="evidence" value="ECO:0007669"/>
    <property type="project" value="Ensembl"/>
</dbReference>
<dbReference type="GO" id="GO:0032874">
    <property type="term" value="P:positive regulation of stress-activated MAPK cascade"/>
    <property type="evidence" value="ECO:0000314"/>
    <property type="project" value="MGI"/>
</dbReference>
<dbReference type="GO" id="GO:0032760">
    <property type="term" value="P:positive regulation of tumor necrosis factor production"/>
    <property type="evidence" value="ECO:0000315"/>
    <property type="project" value="MGI"/>
</dbReference>
<dbReference type="GO" id="GO:1904417">
    <property type="term" value="P:positive regulation of xenophagy"/>
    <property type="evidence" value="ECO:0000315"/>
    <property type="project" value="MGI"/>
</dbReference>
<dbReference type="GO" id="GO:0034976">
    <property type="term" value="P:response to endoplasmic reticulum stress"/>
    <property type="evidence" value="ECO:0000314"/>
    <property type="project" value="UniProtKB"/>
</dbReference>
<dbReference type="GO" id="GO:0051403">
    <property type="term" value="P:stress-activated MAPK cascade"/>
    <property type="evidence" value="ECO:0000314"/>
    <property type="project" value="MGI"/>
</dbReference>
<dbReference type="GO" id="GO:0098792">
    <property type="term" value="P:xenophagy"/>
    <property type="evidence" value="ECO:0000315"/>
    <property type="project" value="MGI"/>
</dbReference>
<dbReference type="FunFam" id="3.40.50.300:FF:001074">
    <property type="entry name" value="Nucleotide binding oligomerization domain containing 1"/>
    <property type="match status" value="1"/>
</dbReference>
<dbReference type="FunFam" id="1.10.533.10:FF:000047">
    <property type="entry name" value="Nucleotide-binding oligomerization domain-containing protein 1"/>
    <property type="match status" value="1"/>
</dbReference>
<dbReference type="FunFam" id="3.80.10.10:FF:000282">
    <property type="entry name" value="Nucleotide-binding oligomerization domain-containing protein 1"/>
    <property type="match status" value="1"/>
</dbReference>
<dbReference type="FunFam" id="3.80.10.10:FF:000254">
    <property type="entry name" value="nucleotide-binding oligomerization domain-containing protein 1"/>
    <property type="match status" value="1"/>
</dbReference>
<dbReference type="Gene3D" id="1.10.533.10">
    <property type="entry name" value="Death Domain, Fas"/>
    <property type="match status" value="1"/>
</dbReference>
<dbReference type="Gene3D" id="3.40.50.300">
    <property type="entry name" value="P-loop containing nucleotide triphosphate hydrolases"/>
    <property type="match status" value="1"/>
</dbReference>
<dbReference type="Gene3D" id="3.80.10.10">
    <property type="entry name" value="Ribonuclease Inhibitor"/>
    <property type="match status" value="1"/>
</dbReference>
<dbReference type="InterPro" id="IPR001315">
    <property type="entry name" value="CARD"/>
</dbReference>
<dbReference type="InterPro" id="IPR011029">
    <property type="entry name" value="DEATH-like_dom_sf"/>
</dbReference>
<dbReference type="InterPro" id="IPR001611">
    <property type="entry name" value="Leu-rich_rpt"/>
</dbReference>
<dbReference type="InterPro" id="IPR032675">
    <property type="entry name" value="LRR_dom_sf"/>
</dbReference>
<dbReference type="InterPro" id="IPR007111">
    <property type="entry name" value="NACHT_NTPase"/>
</dbReference>
<dbReference type="InterPro" id="IPR051261">
    <property type="entry name" value="NLR"/>
</dbReference>
<dbReference type="InterPro" id="IPR041267">
    <property type="entry name" value="NLRP_HD2"/>
</dbReference>
<dbReference type="InterPro" id="IPR041075">
    <property type="entry name" value="NOD1/2_WH"/>
</dbReference>
<dbReference type="InterPro" id="IPR027417">
    <property type="entry name" value="P-loop_NTPase"/>
</dbReference>
<dbReference type="PANTHER" id="PTHR24106">
    <property type="entry name" value="NACHT, LRR AND CARD DOMAINS-CONTAINING"/>
    <property type="match status" value="1"/>
</dbReference>
<dbReference type="Pfam" id="PF00619">
    <property type="entry name" value="CARD"/>
    <property type="match status" value="1"/>
</dbReference>
<dbReference type="Pfam" id="PF13516">
    <property type="entry name" value="LRR_6"/>
    <property type="match status" value="5"/>
</dbReference>
<dbReference type="Pfam" id="PF05729">
    <property type="entry name" value="NACHT"/>
    <property type="match status" value="1"/>
</dbReference>
<dbReference type="Pfam" id="PF17776">
    <property type="entry name" value="NLRC4_HD2"/>
    <property type="match status" value="1"/>
</dbReference>
<dbReference type="Pfam" id="PF17779">
    <property type="entry name" value="NOD2_WH"/>
    <property type="match status" value="1"/>
</dbReference>
<dbReference type="SMART" id="SM00368">
    <property type="entry name" value="LRR_RI"/>
    <property type="match status" value="7"/>
</dbReference>
<dbReference type="SUPFAM" id="SSF47986">
    <property type="entry name" value="DEATH domain"/>
    <property type="match status" value="1"/>
</dbReference>
<dbReference type="SUPFAM" id="SSF52047">
    <property type="entry name" value="RNI-like"/>
    <property type="match status" value="1"/>
</dbReference>
<dbReference type="PROSITE" id="PS50209">
    <property type="entry name" value="CARD"/>
    <property type="match status" value="1"/>
</dbReference>
<dbReference type="PROSITE" id="PS50837">
    <property type="entry name" value="NACHT"/>
    <property type="match status" value="1"/>
</dbReference>
<protein>
    <recommendedName>
        <fullName evidence="11">Nucleotide-binding oligomerization domain-containing protein 1</fullName>
        <shortName evidence="11">mNod1</shortName>
    </recommendedName>
</protein>
<accession>Q8BHB0</accession>
<accession>Q8BUT6</accession>